<protein>
    <recommendedName>
        <fullName>Homeobox protein Hox-A2</fullName>
    </recommendedName>
</protein>
<keyword id="KW-0217">Developmental protein</keyword>
<keyword id="KW-0238">DNA-binding</keyword>
<keyword id="KW-0371">Homeobox</keyword>
<keyword id="KW-0539">Nucleus</keyword>
<keyword id="KW-1185">Reference proteome</keyword>
<keyword id="KW-0804">Transcription</keyword>
<keyword id="KW-0805">Transcription regulation</keyword>
<proteinExistence type="evidence at transcript level"/>
<name>HXA2_BOVIN</name>
<reference key="1">
    <citation type="submission" date="2006-08" db="EMBL/GenBank/DDBJ databases">
        <authorList>
            <consortium name="NIH - Mammalian Gene Collection (MGC) project"/>
        </authorList>
    </citation>
    <scope>NUCLEOTIDE SEQUENCE [LARGE SCALE MRNA]</scope>
    <source>
        <strain>Hereford</strain>
        <tissue>Fetal lung</tissue>
    </source>
</reference>
<comment type="function">
    <text evidence="1">Sequence-specific transcription factor which is part of a developmental regulatory system that provides cells with specific positional identities on the anterior-posterior axis.</text>
</comment>
<comment type="subcellular location">
    <subcellularLocation>
        <location evidence="2">Nucleus</location>
    </subcellularLocation>
</comment>
<comment type="similarity">
    <text evidence="4">Belongs to the Antp homeobox family. Proboscipedia subfamily.</text>
</comment>
<accession>Q0VCS4</accession>
<sequence>MNYEFEREIGFINSQPSLAECLTSFPPVADTFQSSSIKTSTLSHSTLIPPPFEQTIPSLNPGSHPRHGAGGRPKPSPAGSRGSPVPAGALQPPEYPWMKEKKAAKKTVLPPASAASATGPACLSHKESLEIADGSGGGSRRLRTAYTNTQLLELEKEFHFNKYLCRPRRVEIAALLDLTERQVKVWFQNRRMKHKRQTQCKENQNSEGKFKSLEDSEKVDEDEEEKSLFEQALSVSGALLEREGYTFQQNALSQQQASNGYNGDSQSFPVSPLTSNEKNLKHFQHQSPTVPNCLSTMGQNCGSGLNNDSPEALEVPSLQDFNVFSTDSCLQLSDAVSPSLPGSLDSPVDISADSFDFFTDTLTTIDLQHLNY</sequence>
<evidence type="ECO:0000250" key="1"/>
<evidence type="ECO:0000255" key="2">
    <source>
        <dbReference type="PROSITE-ProRule" id="PRU00108"/>
    </source>
</evidence>
<evidence type="ECO:0000256" key="3">
    <source>
        <dbReference type="SAM" id="MobiDB-lite"/>
    </source>
</evidence>
<evidence type="ECO:0000305" key="4"/>
<feature type="chain" id="PRO_0000333800" description="Homeobox protein Hox-A2">
    <location>
        <begin position="1"/>
        <end position="372"/>
    </location>
</feature>
<feature type="DNA-binding region" description="Homeobox" evidence="2">
    <location>
        <begin position="139"/>
        <end position="198"/>
    </location>
</feature>
<feature type="region of interest" description="Disordered" evidence="3">
    <location>
        <begin position="42"/>
        <end position="93"/>
    </location>
</feature>
<feature type="region of interest" description="Disordered" evidence="3">
    <location>
        <begin position="194"/>
        <end position="225"/>
    </location>
</feature>
<feature type="short sequence motif" description="Antp-type hexapeptide">
    <location>
        <begin position="94"/>
        <end position="99"/>
    </location>
</feature>
<organism>
    <name type="scientific">Bos taurus</name>
    <name type="common">Bovine</name>
    <dbReference type="NCBI Taxonomy" id="9913"/>
    <lineage>
        <taxon>Eukaryota</taxon>
        <taxon>Metazoa</taxon>
        <taxon>Chordata</taxon>
        <taxon>Craniata</taxon>
        <taxon>Vertebrata</taxon>
        <taxon>Euteleostomi</taxon>
        <taxon>Mammalia</taxon>
        <taxon>Eutheria</taxon>
        <taxon>Laurasiatheria</taxon>
        <taxon>Artiodactyla</taxon>
        <taxon>Ruminantia</taxon>
        <taxon>Pecora</taxon>
        <taxon>Bovidae</taxon>
        <taxon>Bovinae</taxon>
        <taxon>Bos</taxon>
    </lineage>
</organism>
<gene>
    <name type="primary">HOXA2</name>
</gene>
<dbReference type="EMBL" id="BC120030">
    <property type="protein sequence ID" value="AAI20031.1"/>
    <property type="molecule type" value="mRNA"/>
</dbReference>
<dbReference type="RefSeq" id="NP_001069322.1">
    <property type="nucleotide sequence ID" value="NM_001075854.1"/>
</dbReference>
<dbReference type="SMR" id="Q0VCS4"/>
<dbReference type="FunCoup" id="Q0VCS4">
    <property type="interactions" value="71"/>
</dbReference>
<dbReference type="STRING" id="9913.ENSBTAP00000010699"/>
<dbReference type="PaxDb" id="9913-ENSBTAP00000010699"/>
<dbReference type="GeneID" id="524150"/>
<dbReference type="KEGG" id="bta:524150"/>
<dbReference type="CTD" id="3199"/>
<dbReference type="eggNOG" id="KOG0489">
    <property type="taxonomic scope" value="Eukaryota"/>
</dbReference>
<dbReference type="InParanoid" id="Q0VCS4"/>
<dbReference type="OrthoDB" id="6159439at2759"/>
<dbReference type="Proteomes" id="UP000009136">
    <property type="component" value="Unplaced"/>
</dbReference>
<dbReference type="GO" id="GO:0005634">
    <property type="term" value="C:nucleus"/>
    <property type="evidence" value="ECO:0000318"/>
    <property type="project" value="GO_Central"/>
</dbReference>
<dbReference type="GO" id="GO:0000981">
    <property type="term" value="F:DNA-binding transcription factor activity, RNA polymerase II-specific"/>
    <property type="evidence" value="ECO:0000318"/>
    <property type="project" value="GO_Central"/>
</dbReference>
<dbReference type="GO" id="GO:0000978">
    <property type="term" value="F:RNA polymerase II cis-regulatory region sequence-specific DNA binding"/>
    <property type="evidence" value="ECO:0000318"/>
    <property type="project" value="GO_Central"/>
</dbReference>
<dbReference type="GO" id="GO:0006357">
    <property type="term" value="P:regulation of transcription by RNA polymerase II"/>
    <property type="evidence" value="ECO:0000318"/>
    <property type="project" value="GO_Central"/>
</dbReference>
<dbReference type="CDD" id="cd00086">
    <property type="entry name" value="homeodomain"/>
    <property type="match status" value="1"/>
</dbReference>
<dbReference type="FunFam" id="1.10.10.60:FF:000145">
    <property type="entry name" value="homeobox protein Hox-A2"/>
    <property type="match status" value="1"/>
</dbReference>
<dbReference type="Gene3D" id="1.10.10.60">
    <property type="entry name" value="Homeodomain-like"/>
    <property type="match status" value="1"/>
</dbReference>
<dbReference type="InterPro" id="IPR001356">
    <property type="entry name" value="HD"/>
</dbReference>
<dbReference type="InterPro" id="IPR020479">
    <property type="entry name" value="HD_metazoa"/>
</dbReference>
<dbReference type="InterPro" id="IPR001827">
    <property type="entry name" value="Homeobox_Antennapedia_CS"/>
</dbReference>
<dbReference type="InterPro" id="IPR017970">
    <property type="entry name" value="Homeobox_CS"/>
</dbReference>
<dbReference type="InterPro" id="IPR009057">
    <property type="entry name" value="Homeodomain-like_sf"/>
</dbReference>
<dbReference type="PANTHER" id="PTHR45664:SF3">
    <property type="entry name" value="HOMEOBOX PROTEIN HOX-A2"/>
    <property type="match status" value="1"/>
</dbReference>
<dbReference type="PANTHER" id="PTHR45664">
    <property type="entry name" value="PROTEIN ZERKNUELLT 1-RELATED"/>
    <property type="match status" value="1"/>
</dbReference>
<dbReference type="Pfam" id="PF00046">
    <property type="entry name" value="Homeodomain"/>
    <property type="match status" value="1"/>
</dbReference>
<dbReference type="PRINTS" id="PR00024">
    <property type="entry name" value="HOMEOBOX"/>
</dbReference>
<dbReference type="SMART" id="SM00389">
    <property type="entry name" value="HOX"/>
    <property type="match status" value="1"/>
</dbReference>
<dbReference type="SUPFAM" id="SSF46689">
    <property type="entry name" value="Homeodomain-like"/>
    <property type="match status" value="1"/>
</dbReference>
<dbReference type="PROSITE" id="PS00032">
    <property type="entry name" value="ANTENNAPEDIA"/>
    <property type="match status" value="1"/>
</dbReference>
<dbReference type="PROSITE" id="PS00027">
    <property type="entry name" value="HOMEOBOX_1"/>
    <property type="match status" value="1"/>
</dbReference>
<dbReference type="PROSITE" id="PS50071">
    <property type="entry name" value="HOMEOBOX_2"/>
    <property type="match status" value="1"/>
</dbReference>